<accession>Q0HPF6</accession>
<organism>
    <name type="scientific">Shewanella sp. (strain MR-7)</name>
    <dbReference type="NCBI Taxonomy" id="60481"/>
    <lineage>
        <taxon>Bacteria</taxon>
        <taxon>Pseudomonadati</taxon>
        <taxon>Pseudomonadota</taxon>
        <taxon>Gammaproteobacteria</taxon>
        <taxon>Alteromonadales</taxon>
        <taxon>Shewanellaceae</taxon>
        <taxon>Shewanella</taxon>
    </lineage>
</organism>
<keyword id="KW-0066">ATP synthesis</keyword>
<keyword id="KW-0997">Cell inner membrane</keyword>
<keyword id="KW-1003">Cell membrane</keyword>
<keyword id="KW-0138">CF(0)</keyword>
<keyword id="KW-0375">Hydrogen ion transport</keyword>
<keyword id="KW-0406">Ion transport</keyword>
<keyword id="KW-0446">Lipid-binding</keyword>
<keyword id="KW-0472">Membrane</keyword>
<keyword id="KW-0812">Transmembrane</keyword>
<keyword id="KW-1133">Transmembrane helix</keyword>
<keyword id="KW-0813">Transport</keyword>
<reference key="1">
    <citation type="submission" date="2006-08" db="EMBL/GenBank/DDBJ databases">
        <title>Complete sequence of chromosome 1 of Shewanella sp. MR-7.</title>
        <authorList>
            <person name="Copeland A."/>
            <person name="Lucas S."/>
            <person name="Lapidus A."/>
            <person name="Barry K."/>
            <person name="Detter J.C."/>
            <person name="Glavina del Rio T."/>
            <person name="Hammon N."/>
            <person name="Israni S."/>
            <person name="Dalin E."/>
            <person name="Tice H."/>
            <person name="Pitluck S."/>
            <person name="Kiss H."/>
            <person name="Brettin T."/>
            <person name="Bruce D."/>
            <person name="Han C."/>
            <person name="Tapia R."/>
            <person name="Gilna P."/>
            <person name="Schmutz J."/>
            <person name="Larimer F."/>
            <person name="Land M."/>
            <person name="Hauser L."/>
            <person name="Kyrpides N."/>
            <person name="Mikhailova N."/>
            <person name="Nealson K."/>
            <person name="Konstantinidis K."/>
            <person name="Klappenbach J."/>
            <person name="Tiedje J."/>
            <person name="Richardson P."/>
        </authorList>
    </citation>
    <scope>NUCLEOTIDE SEQUENCE [LARGE SCALE GENOMIC DNA]</scope>
    <source>
        <strain>MR-7</strain>
    </source>
</reference>
<sequence>METILGMTAIAVALLIGMGALGTAIGFGLLGGKFLEGAARQPEMAPMLQVKMFIVAGLLDAVTMIGVGIALFMLFTNPLGAML</sequence>
<gene>
    <name evidence="1" type="primary">atpE</name>
    <name type="ordered locus">Shewmr7_4022</name>
</gene>
<protein>
    <recommendedName>
        <fullName evidence="1">ATP synthase subunit c</fullName>
    </recommendedName>
    <alternativeName>
        <fullName evidence="1">ATP synthase F(0) sector subunit c</fullName>
    </alternativeName>
    <alternativeName>
        <fullName evidence="1">F-type ATPase subunit c</fullName>
        <shortName evidence="1">F-ATPase subunit c</shortName>
    </alternativeName>
    <alternativeName>
        <fullName evidence="1">Lipid-binding protein</fullName>
    </alternativeName>
</protein>
<comment type="function">
    <text evidence="1">F(1)F(0) ATP synthase produces ATP from ADP in the presence of a proton or sodium gradient. F-type ATPases consist of two structural domains, F(1) containing the extramembraneous catalytic core and F(0) containing the membrane proton channel, linked together by a central stalk and a peripheral stalk. During catalysis, ATP synthesis in the catalytic domain of F(1) is coupled via a rotary mechanism of the central stalk subunits to proton translocation.</text>
</comment>
<comment type="function">
    <text evidence="1">Key component of the F(0) channel; it plays a direct role in translocation across the membrane. A homomeric c-ring of between 10-14 subunits forms the central stalk rotor element with the F(1) delta and epsilon subunits.</text>
</comment>
<comment type="subunit">
    <text evidence="1">F-type ATPases have 2 components, F(1) - the catalytic core - and F(0) - the membrane proton channel. F(1) has five subunits: alpha(3), beta(3), gamma(1), delta(1), epsilon(1). F(0) has three main subunits: a(1), b(2) and c(10-14). The alpha and beta chains form an alternating ring which encloses part of the gamma chain. F(1) is attached to F(0) by a central stalk formed by the gamma and epsilon chains, while a peripheral stalk is formed by the delta and b chains.</text>
</comment>
<comment type="subcellular location">
    <subcellularLocation>
        <location evidence="1">Cell inner membrane</location>
        <topology evidence="1">Multi-pass membrane protein</topology>
    </subcellularLocation>
</comment>
<comment type="similarity">
    <text evidence="1">Belongs to the ATPase C chain family.</text>
</comment>
<evidence type="ECO:0000255" key="1">
    <source>
        <dbReference type="HAMAP-Rule" id="MF_01396"/>
    </source>
</evidence>
<name>ATPL_SHESR</name>
<feature type="chain" id="PRO_1000184482" description="ATP synthase subunit c">
    <location>
        <begin position="1"/>
        <end position="83"/>
    </location>
</feature>
<feature type="transmembrane region" description="Helical" evidence="1">
    <location>
        <begin position="10"/>
        <end position="30"/>
    </location>
</feature>
<feature type="transmembrane region" description="Helical" evidence="1">
    <location>
        <begin position="52"/>
        <end position="72"/>
    </location>
</feature>
<feature type="site" description="Reversibly protonated during proton transport" evidence="1">
    <location>
        <position position="60"/>
    </location>
</feature>
<proteinExistence type="inferred from homology"/>
<dbReference type="EMBL" id="CP000444">
    <property type="protein sequence ID" value="ABI44999.1"/>
    <property type="molecule type" value="Genomic_DNA"/>
</dbReference>
<dbReference type="SMR" id="Q0HPF6"/>
<dbReference type="KEGG" id="shm:Shewmr7_4022"/>
<dbReference type="HOGENOM" id="CLU_148047_1_0_6"/>
<dbReference type="GO" id="GO:0005886">
    <property type="term" value="C:plasma membrane"/>
    <property type="evidence" value="ECO:0007669"/>
    <property type="project" value="UniProtKB-SubCell"/>
</dbReference>
<dbReference type="GO" id="GO:0045259">
    <property type="term" value="C:proton-transporting ATP synthase complex"/>
    <property type="evidence" value="ECO:0007669"/>
    <property type="project" value="UniProtKB-KW"/>
</dbReference>
<dbReference type="GO" id="GO:0033177">
    <property type="term" value="C:proton-transporting two-sector ATPase complex, proton-transporting domain"/>
    <property type="evidence" value="ECO:0007669"/>
    <property type="project" value="InterPro"/>
</dbReference>
<dbReference type="GO" id="GO:0008289">
    <property type="term" value="F:lipid binding"/>
    <property type="evidence" value="ECO:0007669"/>
    <property type="project" value="UniProtKB-KW"/>
</dbReference>
<dbReference type="GO" id="GO:0046933">
    <property type="term" value="F:proton-transporting ATP synthase activity, rotational mechanism"/>
    <property type="evidence" value="ECO:0007669"/>
    <property type="project" value="UniProtKB-UniRule"/>
</dbReference>
<dbReference type="CDD" id="cd18185">
    <property type="entry name" value="ATP-synt_Fo_c_ATPE"/>
    <property type="match status" value="1"/>
</dbReference>
<dbReference type="FunFam" id="1.20.20.10:FF:000002">
    <property type="entry name" value="ATP synthase subunit c"/>
    <property type="match status" value="1"/>
</dbReference>
<dbReference type="Gene3D" id="1.20.20.10">
    <property type="entry name" value="F1F0 ATP synthase subunit C"/>
    <property type="match status" value="1"/>
</dbReference>
<dbReference type="HAMAP" id="MF_01396">
    <property type="entry name" value="ATP_synth_c_bact"/>
    <property type="match status" value="1"/>
</dbReference>
<dbReference type="InterPro" id="IPR005953">
    <property type="entry name" value="ATP_synth_csu_bac/chlpt"/>
</dbReference>
<dbReference type="InterPro" id="IPR000454">
    <property type="entry name" value="ATP_synth_F0_csu"/>
</dbReference>
<dbReference type="InterPro" id="IPR020537">
    <property type="entry name" value="ATP_synth_F0_csu_DDCD_BS"/>
</dbReference>
<dbReference type="InterPro" id="IPR038662">
    <property type="entry name" value="ATP_synth_F0_csu_sf"/>
</dbReference>
<dbReference type="InterPro" id="IPR002379">
    <property type="entry name" value="ATPase_proteolipid_c-like_dom"/>
</dbReference>
<dbReference type="InterPro" id="IPR035921">
    <property type="entry name" value="F/V-ATP_Csub_sf"/>
</dbReference>
<dbReference type="NCBIfam" id="TIGR01260">
    <property type="entry name" value="ATP_synt_c"/>
    <property type="match status" value="1"/>
</dbReference>
<dbReference type="NCBIfam" id="NF005363">
    <property type="entry name" value="PRK06876.1"/>
    <property type="match status" value="1"/>
</dbReference>
<dbReference type="Pfam" id="PF00137">
    <property type="entry name" value="ATP-synt_C"/>
    <property type="match status" value="1"/>
</dbReference>
<dbReference type="PRINTS" id="PR00124">
    <property type="entry name" value="ATPASEC"/>
</dbReference>
<dbReference type="SUPFAM" id="SSF81333">
    <property type="entry name" value="F1F0 ATP synthase subunit C"/>
    <property type="match status" value="1"/>
</dbReference>
<dbReference type="PROSITE" id="PS00605">
    <property type="entry name" value="ATPASE_C"/>
    <property type="match status" value="1"/>
</dbReference>